<reference key="1">
    <citation type="journal article" date="1983" name="Gene">
        <title>The nucleotide sequence of the genes encoded in early region 2b of human adenovirus type 7.</title>
        <authorList>
            <person name="Engler J.A."/>
            <person name="Hoppe M.S."/>
            <person name="van Bree M.P."/>
        </authorList>
    </citation>
    <scope>NUCLEOTIDE SEQUENCE [GENOMIC DNA]</scope>
    <source>
        <strain>Gomen</strain>
    </source>
</reference>
<accession>P05668</accession>
<dbReference type="EMBL" id="X03000">
    <property type="protein sequence ID" value="CAA26773.1"/>
    <property type="molecule type" value="Genomic_DNA"/>
</dbReference>
<name>Y97_ADE07</name>
<organismHost>
    <name type="scientific">Homo sapiens</name>
    <name type="common">Human</name>
    <dbReference type="NCBI Taxonomy" id="9606"/>
</organismHost>
<keyword id="KW-0244">Early protein</keyword>
<organism>
    <name type="scientific">Human adenovirus B serotype 7</name>
    <name type="common">HAdV-7</name>
    <name type="synonym">Human adenovirus 7</name>
    <dbReference type="NCBI Taxonomy" id="10519"/>
    <lineage>
        <taxon>Viruses</taxon>
        <taxon>Varidnaviria</taxon>
        <taxon>Bamfordvirae</taxon>
        <taxon>Preplasmiviricota</taxon>
        <taxon>Tectiliviricetes</taxon>
        <taxon>Rowavirales</taxon>
        <taxon>Adenoviridae</taxon>
        <taxon>Mastadenovirus</taxon>
        <taxon>Human mastadenovirus B</taxon>
    </lineage>
</organism>
<feature type="chain" id="PRO_0000221931" description="Uncharacterized 9.7 kDa early protein">
    <location>
        <begin position="1"/>
        <end position="91"/>
    </location>
</feature>
<protein>
    <recommendedName>
        <fullName>Uncharacterized 9.7 kDa early protein</fullName>
    </recommendedName>
</protein>
<sequence>MSHPPSIILTSGQIFIVVLHESFHGHFFFARPAMHASDPEPAHGLDKCQLRYNPFGEDGLLHLGEGGLKVVKVHEAVVGPGVDCVGAVGHD</sequence>
<proteinExistence type="predicted"/>